<comment type="function">
    <molecule>Snake venom metalloproteinase</molecule>
    <text evidence="1">Impairs hemostasis in the envenomed animal.</text>
</comment>
<comment type="function">
    <molecule>Disintegrin elegantin-1a</molecule>
    <text evidence="6">Inhibits platelet aggregation induced by ADP, thrombin, platelet-activating factor and collagen. Acts by inhibiting fibrinogen interaction with platelet receptors GPIIb/GPIIIa (ITGA2B/ITGB3).</text>
</comment>
<comment type="cofactor">
    <cofactor evidence="1">
        <name>Zn(2+)</name>
        <dbReference type="ChEBI" id="CHEBI:29105"/>
    </cofactor>
    <text evidence="1">Binds 1 zinc ion per subunit.</text>
</comment>
<comment type="subunit">
    <text evidence="1">Monomer.</text>
</comment>
<comment type="subcellular location">
    <subcellularLocation>
        <location evidence="6 7">Secreted</location>
    </subcellularLocation>
</comment>
<comment type="tissue specificity">
    <text evidence="9 10">Expressed by the venom gland.</text>
</comment>
<comment type="mass spectrometry">
    <molecule>Disintegrin elegantin-1a</molecule>
    <text>Isoform 1a.</text>
</comment>
<comment type="mass spectrometry">
    <molecule>Disintegrin elegantin-1b</molecule>
    <text>Isoform 1b.</text>
</comment>
<comment type="mass spectrometry">
    <molecule>Disintegrin elegantin-1c</molecule>
    <text>Isoform 1c.</text>
</comment>
<comment type="miscellaneous">
    <text>The sequence shown is that of elegantin-1a.</text>
</comment>
<comment type="miscellaneous">
    <text>The disintegrin belongs to the medium disintegrin subfamily.</text>
</comment>
<comment type="similarity">
    <text evidence="8">Belongs to the venom metalloproteinase (M12B) family. P-II subfamily. P-IIa sub-subfamily.</text>
</comment>
<dbReference type="EC" id="3.4.24.-"/>
<dbReference type="EMBL" id="AB059571">
    <property type="protein sequence ID" value="BAB69657.1"/>
    <property type="molecule type" value="mRNA"/>
</dbReference>
<dbReference type="SMR" id="P17349"/>
<dbReference type="ELM" id="P17349"/>
<dbReference type="MEROPS" id="M12.157"/>
<dbReference type="GO" id="GO:0005576">
    <property type="term" value="C:extracellular region"/>
    <property type="evidence" value="ECO:0007669"/>
    <property type="project" value="UniProtKB-SubCell"/>
</dbReference>
<dbReference type="GO" id="GO:0005886">
    <property type="term" value="C:plasma membrane"/>
    <property type="evidence" value="ECO:0007669"/>
    <property type="project" value="TreeGrafter"/>
</dbReference>
<dbReference type="GO" id="GO:0046872">
    <property type="term" value="F:metal ion binding"/>
    <property type="evidence" value="ECO:0007669"/>
    <property type="project" value="UniProtKB-KW"/>
</dbReference>
<dbReference type="GO" id="GO:0004222">
    <property type="term" value="F:metalloendopeptidase activity"/>
    <property type="evidence" value="ECO:0007669"/>
    <property type="project" value="InterPro"/>
</dbReference>
<dbReference type="GO" id="GO:0090729">
    <property type="term" value="F:toxin activity"/>
    <property type="evidence" value="ECO:0007669"/>
    <property type="project" value="UniProtKB-KW"/>
</dbReference>
<dbReference type="GO" id="GO:0006508">
    <property type="term" value="P:proteolysis"/>
    <property type="evidence" value="ECO:0007669"/>
    <property type="project" value="UniProtKB-KW"/>
</dbReference>
<dbReference type="CDD" id="cd04269">
    <property type="entry name" value="ZnMc_adamalysin_II_like"/>
    <property type="match status" value="1"/>
</dbReference>
<dbReference type="FunFam" id="3.40.390.10:FF:000002">
    <property type="entry name" value="Disintegrin and metalloproteinase domain-containing protein 22"/>
    <property type="match status" value="1"/>
</dbReference>
<dbReference type="FunFam" id="4.10.70.10:FF:000005">
    <property type="entry name" value="Zinc metalloproteinase/disintegrin"/>
    <property type="match status" value="1"/>
</dbReference>
<dbReference type="Gene3D" id="3.40.390.10">
    <property type="entry name" value="Collagenase (Catalytic Domain)"/>
    <property type="match status" value="1"/>
</dbReference>
<dbReference type="Gene3D" id="4.10.70.10">
    <property type="entry name" value="Disintegrin domain"/>
    <property type="match status" value="1"/>
</dbReference>
<dbReference type="InterPro" id="IPR018358">
    <property type="entry name" value="Disintegrin_CS"/>
</dbReference>
<dbReference type="InterPro" id="IPR001762">
    <property type="entry name" value="Disintegrin_dom"/>
</dbReference>
<dbReference type="InterPro" id="IPR036436">
    <property type="entry name" value="Disintegrin_dom_sf"/>
</dbReference>
<dbReference type="InterPro" id="IPR024079">
    <property type="entry name" value="MetalloPept_cat_dom_sf"/>
</dbReference>
<dbReference type="InterPro" id="IPR001590">
    <property type="entry name" value="Peptidase_M12B"/>
</dbReference>
<dbReference type="InterPro" id="IPR002870">
    <property type="entry name" value="Peptidase_M12B_N"/>
</dbReference>
<dbReference type="InterPro" id="IPR034027">
    <property type="entry name" value="Reprolysin_adamalysin"/>
</dbReference>
<dbReference type="PANTHER" id="PTHR11905">
    <property type="entry name" value="ADAM A DISINTEGRIN AND METALLOPROTEASE DOMAIN"/>
    <property type="match status" value="1"/>
</dbReference>
<dbReference type="PANTHER" id="PTHR11905:SF32">
    <property type="entry name" value="DISINTEGRIN AND METALLOPROTEINASE DOMAIN-CONTAINING PROTEIN 28"/>
    <property type="match status" value="1"/>
</dbReference>
<dbReference type="Pfam" id="PF00200">
    <property type="entry name" value="Disintegrin"/>
    <property type="match status" value="1"/>
</dbReference>
<dbReference type="Pfam" id="PF01562">
    <property type="entry name" value="Pep_M12B_propep"/>
    <property type="match status" value="1"/>
</dbReference>
<dbReference type="Pfam" id="PF01421">
    <property type="entry name" value="Reprolysin"/>
    <property type="match status" value="1"/>
</dbReference>
<dbReference type="PRINTS" id="PR00289">
    <property type="entry name" value="DISINTEGRIN"/>
</dbReference>
<dbReference type="SMART" id="SM00050">
    <property type="entry name" value="DISIN"/>
    <property type="match status" value="1"/>
</dbReference>
<dbReference type="SUPFAM" id="SSF57552">
    <property type="entry name" value="Blood coagulation inhibitor (disintegrin)"/>
    <property type="match status" value="1"/>
</dbReference>
<dbReference type="SUPFAM" id="SSF55486">
    <property type="entry name" value="Metalloproteases ('zincins'), catalytic domain"/>
    <property type="match status" value="1"/>
</dbReference>
<dbReference type="PROSITE" id="PS50215">
    <property type="entry name" value="ADAM_MEPRO"/>
    <property type="match status" value="1"/>
</dbReference>
<dbReference type="PROSITE" id="PS00427">
    <property type="entry name" value="DISINTEGRIN_1"/>
    <property type="match status" value="1"/>
</dbReference>
<dbReference type="PROSITE" id="PS50214">
    <property type="entry name" value="DISINTEGRIN_2"/>
    <property type="match status" value="1"/>
</dbReference>
<dbReference type="PROSITE" id="PS00142">
    <property type="entry name" value="ZINC_PROTEASE"/>
    <property type="match status" value="1"/>
</dbReference>
<sequence>MIQVLLVTICLAVFPYQGSSIILESGNVDDYEVVYPRKVTALPKGAVQPKYEDAMQYEFKVNGEAVVLHLEKNKGLFSEDYSETHYSPDGREITTYPSVEDHCYYHGRIHNDADSTASISACDGLKGYFKLQGETYLIEPLELSDSEAHAVFKYENVEKEDEAPKMCGVTQNWESDESIKKASQLYLTPEQQRFPQRYIKLAIVVDHGMYTKYSSNFKKIRKRVHQMVSNINEMCRPLNIAITLALLDVWSEKDFITVQADAPTTAGLFGDWRERVLLKKKNHDHAQLLTDTNFARNTIGWAYLGRMCDEKYSVGVVQDHSSKVFMVAVTMTHELGHNLGMEHDDKDKCKCEACIMSAVISDKQSKLFSDCSKDYYQTFLTNDNPQCILNAPLRTDTVSTPVSGNEFLEAGEECDCGSPENPCCDAATCKLRPGAQCADGLCCDQCRFKKKRTICRRARGDNPDDRCTGQSADCPRNGLYS</sequence>
<evidence type="ECO:0000250" key="1"/>
<evidence type="ECO:0000250" key="2">
    <source>
        <dbReference type="UniProtKB" id="Q0NZX5"/>
    </source>
</evidence>
<evidence type="ECO:0000255" key="3"/>
<evidence type="ECO:0000255" key="4">
    <source>
        <dbReference type="PROSITE-ProRule" id="PRU00068"/>
    </source>
</evidence>
<evidence type="ECO:0000255" key="5">
    <source>
        <dbReference type="PROSITE-ProRule" id="PRU00276"/>
    </source>
</evidence>
<evidence type="ECO:0000269" key="6">
    <source>
    </source>
</evidence>
<evidence type="ECO:0000269" key="7">
    <source>
    </source>
</evidence>
<evidence type="ECO:0000305" key="8"/>
<evidence type="ECO:0000305" key="9">
    <source>
    </source>
</evidence>
<evidence type="ECO:0000305" key="10">
    <source>
    </source>
</evidence>
<proteinExistence type="evidence at protein level"/>
<reference key="1">
    <citation type="submission" date="2001-10" db="EMBL/GenBank/DDBJ databases">
        <authorList>
            <person name="Murayama N."/>
            <person name="Shimosaka S."/>
        </authorList>
    </citation>
    <scope>NUCLEOTIDE SEQUENCE [MRNA]</scope>
    <source>
        <tissue>Venom gland</tissue>
    </source>
</reference>
<reference key="2">
    <citation type="journal article" date="1996" name="Biochem. J.">
        <title>Amino acid sequence and molecular modelling of glycoprotein IIb-IIIa and fibronectin receptor iso-antagonists from Trimeresurus elegans venom.</title>
        <authorList>
            <person name="Scaloni A."/>
            <person name="Di Martino E."/>
            <person name="Miraglia N."/>
            <person name="Pelagalli A."/>
            <person name="Della Morte R."/>
            <person name="Staiano N."/>
            <person name="Pucci P."/>
        </authorList>
    </citation>
    <scope>PROTEIN SEQUENCE OF 409-481</scope>
    <scope>MASS SPECTROMETRY</scope>
    <scope>SUBCELLULAR LOCATION</scope>
    <source>
        <tissue>Venom</tissue>
    </source>
</reference>
<reference key="3">
    <citation type="journal article" date="1990" name="Biochim. Biophys. Acta">
        <title>Elegantin and albolabrin purified peptides from viper venoms: homologies with the RGDS domain of fibrinogen and von Willebrand factor.</title>
        <authorList>
            <person name="Williams J."/>
            <person name="Rucinski B."/>
            <person name="Holt J."/>
            <person name="Niewiarowski S."/>
        </authorList>
    </citation>
    <scope>PROTEIN SEQUENCE OF 409-481</scope>
    <scope>FUNCTION OF ELEGANTIN-1A</scope>
    <scope>SUBCELLULAR LOCATION</scope>
    <source>
        <tissue>Venom</tissue>
    </source>
</reference>
<keyword id="KW-1217">Cell adhesion impairing toxin</keyword>
<keyword id="KW-0903">Direct protein sequencing</keyword>
<keyword id="KW-1015">Disulfide bond</keyword>
<keyword id="KW-1199">Hemostasis impairing toxin</keyword>
<keyword id="KW-0378">Hydrolase</keyword>
<keyword id="KW-0479">Metal-binding</keyword>
<keyword id="KW-0482">Metalloprotease</keyword>
<keyword id="KW-1201">Platelet aggregation inhibiting toxin</keyword>
<keyword id="KW-0645">Protease</keyword>
<keyword id="KW-0964">Secreted</keyword>
<keyword id="KW-0732">Signal</keyword>
<keyword id="KW-0800">Toxin</keyword>
<keyword id="KW-0862">Zinc</keyword>
<keyword id="KW-0865">Zymogen</keyword>
<organism>
    <name type="scientific">Protobothrops elegans</name>
    <name type="common">Elegant pitviper</name>
    <name type="synonym">Trimeresurus elegans</name>
    <dbReference type="NCBI Taxonomy" id="88086"/>
    <lineage>
        <taxon>Eukaryota</taxon>
        <taxon>Metazoa</taxon>
        <taxon>Chordata</taxon>
        <taxon>Craniata</taxon>
        <taxon>Vertebrata</taxon>
        <taxon>Euteleostomi</taxon>
        <taxon>Lepidosauria</taxon>
        <taxon>Squamata</taxon>
        <taxon>Bifurcata</taxon>
        <taxon>Unidentata</taxon>
        <taxon>Episquamata</taxon>
        <taxon>Toxicofera</taxon>
        <taxon>Serpentes</taxon>
        <taxon>Colubroidea</taxon>
        <taxon>Viperidae</taxon>
        <taxon>Crotalinae</taxon>
        <taxon>Protobothrops</taxon>
    </lineage>
</organism>
<accession>P17349</accession>
<accession>Q90YA7</accession>
<name>VM2E1_PROEL</name>
<feature type="signal peptide" evidence="3">
    <location>
        <begin position="1"/>
        <end position="20"/>
    </location>
</feature>
<feature type="propeptide" id="PRO_0000028981" evidence="1">
    <location>
        <begin position="21"/>
        <end position="190"/>
    </location>
</feature>
<feature type="chain" id="PRO_0000028982" description="Snake venom metalloproteinase" evidence="1">
    <location>
        <begin position="191"/>
        <end position="392"/>
    </location>
</feature>
<feature type="propeptide" id="PRO_0000028983" evidence="6 7">
    <location>
        <begin position="393"/>
        <end position="408"/>
    </location>
</feature>
<feature type="chain" id="PRO_0000028984" description="Disintegrin elegantin-1a">
    <location>
        <begin position="409"/>
        <end position="481"/>
    </location>
</feature>
<feature type="chain" id="PRO_0000028985" description="Disintegrin elegantin-1b">
    <location>
        <begin position="411"/>
        <end position="481"/>
    </location>
</feature>
<feature type="chain" id="PRO_0000028986" description="Disintegrin elegantin-1c">
    <location>
        <begin position="411"/>
        <end position="480"/>
    </location>
</feature>
<feature type="domain" description="Peptidase M12B" evidence="5">
    <location>
        <begin position="197"/>
        <end position="392"/>
    </location>
</feature>
<feature type="domain" description="Disintegrin" evidence="4">
    <location>
        <begin position="400"/>
        <end position="481"/>
    </location>
</feature>
<feature type="short sequence motif" description="Cell attachment site">
    <location>
        <begin position="459"/>
        <end position="461"/>
    </location>
</feature>
<feature type="active site" evidence="5">
    <location>
        <position position="334"/>
    </location>
</feature>
<feature type="binding site" evidence="5">
    <location>
        <position position="333"/>
    </location>
    <ligand>
        <name>Zn(2+)</name>
        <dbReference type="ChEBI" id="CHEBI:29105"/>
        <note>catalytic</note>
    </ligand>
</feature>
<feature type="binding site" evidence="5">
    <location>
        <position position="337"/>
    </location>
    <ligand>
        <name>Zn(2+)</name>
        <dbReference type="ChEBI" id="CHEBI:29105"/>
        <note>catalytic</note>
    </ligand>
</feature>
<feature type="binding site" evidence="5">
    <location>
        <position position="343"/>
    </location>
    <ligand>
        <name>Zn(2+)</name>
        <dbReference type="ChEBI" id="CHEBI:29105"/>
        <note>catalytic</note>
    </ligand>
</feature>
<feature type="disulfide bond" evidence="5">
    <location>
        <begin position="308"/>
        <end position="387"/>
    </location>
</feature>
<feature type="disulfide bond" evidence="5">
    <location>
        <begin position="349"/>
        <end position="371"/>
    </location>
</feature>
<feature type="disulfide bond" evidence="5">
    <location>
        <begin position="351"/>
        <end position="354"/>
    </location>
</feature>
<feature type="disulfide bond" evidence="2">
    <location>
        <begin position="414"/>
        <end position="429"/>
    </location>
</feature>
<feature type="disulfide bond" evidence="2">
    <location>
        <begin position="416"/>
        <end position="424"/>
    </location>
</feature>
<feature type="disulfide bond" evidence="2">
    <location>
        <begin position="423"/>
        <end position="446"/>
    </location>
</feature>
<feature type="disulfide bond" evidence="2">
    <location>
        <begin position="437"/>
        <end position="443"/>
    </location>
</feature>
<feature type="disulfide bond" evidence="2">
    <location>
        <begin position="442"/>
        <end position="467"/>
    </location>
</feature>
<feature type="disulfide bond" evidence="2 4">
    <location>
        <begin position="455"/>
        <end position="474"/>
    </location>
</feature>
<protein>
    <recommendedName>
        <fullName>Zinc metalloproteinase/disintegrin</fullName>
    </recommendedName>
    <component>
        <recommendedName>
            <fullName>Snake venom metalloproteinase</fullName>
            <shortName>SVMP</shortName>
            <ecNumber>3.4.24.-</ecNumber>
        </recommendedName>
    </component>
    <component>
        <recommendedName>
            <fullName>Disintegrin elegantin-1a</fullName>
        </recommendedName>
    </component>
    <component>
        <recommendedName>
            <fullName>Disintegrin elegantin-1b</fullName>
        </recommendedName>
    </component>
    <component>
        <recommendedName>
            <fullName>Disintegrin elegantin-1c</fullName>
        </recommendedName>
    </component>
</protein>